<keyword id="KW-0150">Chloroplast</keyword>
<keyword id="KW-0934">Plastid</keyword>
<keyword id="KW-0687">Ribonucleoprotein</keyword>
<keyword id="KW-0689">Ribosomal protein</keyword>
<keyword id="KW-0694">RNA-binding</keyword>
<keyword id="KW-0699">rRNA-binding</keyword>
<comment type="function">
    <text evidence="1">Binds 16S rRNA, required for the assembly of 30S particles.</text>
</comment>
<comment type="subunit">
    <text evidence="1">Part of the 30S ribosomal subunit.</text>
</comment>
<comment type="subcellular location">
    <subcellularLocation>
        <location>Plastid</location>
        <location>Chloroplast</location>
    </subcellularLocation>
</comment>
<comment type="similarity">
    <text evidence="1">Belongs to the universal ribosomal protein uS14 family.</text>
</comment>
<organism>
    <name type="scientific">Populus alba</name>
    <name type="common">White poplar</name>
    <dbReference type="NCBI Taxonomy" id="43335"/>
    <lineage>
        <taxon>Eukaryota</taxon>
        <taxon>Viridiplantae</taxon>
        <taxon>Streptophyta</taxon>
        <taxon>Embryophyta</taxon>
        <taxon>Tracheophyta</taxon>
        <taxon>Spermatophyta</taxon>
        <taxon>Magnoliopsida</taxon>
        <taxon>eudicotyledons</taxon>
        <taxon>Gunneridae</taxon>
        <taxon>Pentapetalae</taxon>
        <taxon>rosids</taxon>
        <taxon>fabids</taxon>
        <taxon>Malpighiales</taxon>
        <taxon>Salicaceae</taxon>
        <taxon>Saliceae</taxon>
        <taxon>Populus</taxon>
    </lineage>
</organism>
<geneLocation type="chloroplast"/>
<accession>Q14FF9</accession>
<sequence>MARKSLIQREKKRQKLEQKYHLIRRSSKKEISKVPSLSDKWEIHGKLQSPPRNSAPTRLHRRCFLTGRPRANYRDFGLSGHILRAKVHACLLPGATRSSW</sequence>
<name>RR14_POPAL</name>
<gene>
    <name evidence="1" type="primary">rps14</name>
</gene>
<dbReference type="EMBL" id="AP008956">
    <property type="protein sequence ID" value="BAE97203.1"/>
    <property type="molecule type" value="Genomic_DNA"/>
</dbReference>
<dbReference type="RefSeq" id="YP_665556.1">
    <property type="nucleotide sequence ID" value="NC_008235.1"/>
</dbReference>
<dbReference type="SMR" id="Q14FF9"/>
<dbReference type="GeneID" id="4178259"/>
<dbReference type="KEGG" id="palz:4178259"/>
<dbReference type="OrthoDB" id="16561at3646"/>
<dbReference type="GO" id="GO:0009507">
    <property type="term" value="C:chloroplast"/>
    <property type="evidence" value="ECO:0007669"/>
    <property type="project" value="UniProtKB-SubCell"/>
</dbReference>
<dbReference type="GO" id="GO:0015935">
    <property type="term" value="C:small ribosomal subunit"/>
    <property type="evidence" value="ECO:0007669"/>
    <property type="project" value="TreeGrafter"/>
</dbReference>
<dbReference type="GO" id="GO:0019843">
    <property type="term" value="F:rRNA binding"/>
    <property type="evidence" value="ECO:0007669"/>
    <property type="project" value="UniProtKB-UniRule"/>
</dbReference>
<dbReference type="GO" id="GO:0003735">
    <property type="term" value="F:structural constituent of ribosome"/>
    <property type="evidence" value="ECO:0007669"/>
    <property type="project" value="InterPro"/>
</dbReference>
<dbReference type="GO" id="GO:0006412">
    <property type="term" value="P:translation"/>
    <property type="evidence" value="ECO:0007669"/>
    <property type="project" value="UniProtKB-UniRule"/>
</dbReference>
<dbReference type="FunFam" id="1.10.287.1480:FF:000001">
    <property type="entry name" value="30S ribosomal protein S14"/>
    <property type="match status" value="1"/>
</dbReference>
<dbReference type="Gene3D" id="1.10.287.1480">
    <property type="match status" value="1"/>
</dbReference>
<dbReference type="HAMAP" id="MF_00537">
    <property type="entry name" value="Ribosomal_uS14_1"/>
    <property type="match status" value="1"/>
</dbReference>
<dbReference type="InterPro" id="IPR001209">
    <property type="entry name" value="Ribosomal_uS14"/>
</dbReference>
<dbReference type="InterPro" id="IPR023036">
    <property type="entry name" value="Ribosomal_uS14_bac/plastid"/>
</dbReference>
<dbReference type="InterPro" id="IPR018271">
    <property type="entry name" value="Ribosomal_uS14_CS"/>
</dbReference>
<dbReference type="NCBIfam" id="NF006477">
    <property type="entry name" value="PRK08881.1"/>
    <property type="match status" value="1"/>
</dbReference>
<dbReference type="PANTHER" id="PTHR19836">
    <property type="entry name" value="30S RIBOSOMAL PROTEIN S14"/>
    <property type="match status" value="1"/>
</dbReference>
<dbReference type="PANTHER" id="PTHR19836:SF19">
    <property type="entry name" value="SMALL RIBOSOMAL SUBUNIT PROTEIN US14M"/>
    <property type="match status" value="1"/>
</dbReference>
<dbReference type="Pfam" id="PF00253">
    <property type="entry name" value="Ribosomal_S14"/>
    <property type="match status" value="1"/>
</dbReference>
<dbReference type="SUPFAM" id="SSF57716">
    <property type="entry name" value="Glucocorticoid receptor-like (DNA-binding domain)"/>
    <property type="match status" value="1"/>
</dbReference>
<dbReference type="PROSITE" id="PS00527">
    <property type="entry name" value="RIBOSOMAL_S14"/>
    <property type="match status" value="1"/>
</dbReference>
<feature type="chain" id="PRO_0000276698" description="Small ribosomal subunit protein uS14c">
    <location>
        <begin position="1"/>
        <end position="100"/>
    </location>
</feature>
<evidence type="ECO:0000255" key="1">
    <source>
        <dbReference type="HAMAP-Rule" id="MF_00537"/>
    </source>
</evidence>
<evidence type="ECO:0000305" key="2"/>
<protein>
    <recommendedName>
        <fullName evidence="1">Small ribosomal subunit protein uS14c</fullName>
    </recommendedName>
    <alternativeName>
        <fullName evidence="2">30S ribosomal protein S14, chloroplastic</fullName>
    </alternativeName>
</protein>
<proteinExistence type="inferred from homology"/>
<reference key="1">
    <citation type="submission" date="2005-03" db="EMBL/GenBank/DDBJ databases">
        <title>Complete structure of the chloroplast genome of Populus alba.</title>
        <authorList>
            <person name="Okumura S."/>
            <person name="Yamashita A."/>
            <person name="Kanamoto H."/>
            <person name="Hattori M."/>
            <person name="Takase H."/>
            <person name="Tomizawa K."/>
        </authorList>
    </citation>
    <scope>NUCLEOTIDE SEQUENCE [LARGE SCALE GENOMIC DNA]</scope>
</reference>